<keyword id="KW-0325">Glycoprotein</keyword>
<keyword id="KW-0378">Hydrolase</keyword>
<keyword id="KW-0645">Protease</keyword>
<keyword id="KW-0964">Secreted</keyword>
<keyword id="KW-0720">Serine protease</keyword>
<keyword id="KW-0732">Signal</keyword>
<keyword id="KW-0843">Virulence</keyword>
<keyword id="KW-0865">Zymogen</keyword>
<name>SUB6_TRIVH</name>
<gene>
    <name type="primary">SUB6</name>
    <name type="ORF">TRV_02343</name>
</gene>
<organism>
    <name type="scientific">Trichophyton verrucosum (strain HKI 0517)</name>
    <dbReference type="NCBI Taxonomy" id="663202"/>
    <lineage>
        <taxon>Eukaryota</taxon>
        <taxon>Fungi</taxon>
        <taxon>Dikarya</taxon>
        <taxon>Ascomycota</taxon>
        <taxon>Pezizomycotina</taxon>
        <taxon>Eurotiomycetes</taxon>
        <taxon>Eurotiomycetidae</taxon>
        <taxon>Onygenales</taxon>
        <taxon>Arthrodermataceae</taxon>
        <taxon>Trichophyton</taxon>
    </lineage>
</organism>
<sequence length="412" mass="42638">MGFITKAIPIVLAALSTVNGARILEAGPHAETIPNKYIVVMKKDVSEESFSAHTTWLSQTLNSRLMRRAGSSKPMAGMQNKYSLGGIFRAYSGEFDDAMIKDISSHDDVDFIEPDFVVRATTNGTNLTHQDNVPSWGLARVSTRKPGGTTYYYDPSAGKGVTAYVIDTGIDTKHEDFGGRAKWGKNLVDQMDEDCNGHGTHVAGTVGGTKYGLAKGVSLVAVKVLDCEGSGSNSGVIKGMEWAMMDASGGGNGTAKAAGKAVMNMSLGGPRSEATNQAAKAISDAGIFLAVAAGNENMDAQHSSPASEPSVCTVAASTKDDGKANFSNFGSVVDVYAPGKDIVSLKPGGGTDTLSGTSMASPHVCGLGAYLIGLGKQGGPGLCDTIKQMATDAIQSPGEDTTSKLIYNGSGK</sequence>
<comment type="function">
    <text evidence="1">Secreted subtilisin-like serine protease with keratinolytic activity that contributes to pathogenicity.</text>
</comment>
<comment type="subcellular location">
    <subcellularLocation>
        <location evidence="1">Secreted</location>
    </subcellularLocation>
</comment>
<comment type="similarity">
    <text evidence="4">Belongs to the peptidase S8 family.</text>
</comment>
<dbReference type="EC" id="3.4.21.-"/>
<dbReference type="EMBL" id="ACYE01000120">
    <property type="protein sequence ID" value="EFE42978.1"/>
    <property type="molecule type" value="Genomic_DNA"/>
</dbReference>
<dbReference type="RefSeq" id="XP_003023596.1">
    <property type="nucleotide sequence ID" value="XM_003023550.1"/>
</dbReference>
<dbReference type="SMR" id="D4D5H3"/>
<dbReference type="GlyCosmos" id="D4D5H3">
    <property type="glycosylation" value="4 sites, No reported glycans"/>
</dbReference>
<dbReference type="GeneID" id="9577068"/>
<dbReference type="KEGG" id="tve:TRV_02343"/>
<dbReference type="HOGENOM" id="CLU_011263_1_3_1"/>
<dbReference type="OrthoDB" id="4406at34384"/>
<dbReference type="Proteomes" id="UP000008383">
    <property type="component" value="Unassembled WGS sequence"/>
</dbReference>
<dbReference type="GO" id="GO:0005576">
    <property type="term" value="C:extracellular region"/>
    <property type="evidence" value="ECO:0007669"/>
    <property type="project" value="UniProtKB-SubCell"/>
</dbReference>
<dbReference type="GO" id="GO:0004252">
    <property type="term" value="F:serine-type endopeptidase activity"/>
    <property type="evidence" value="ECO:0007669"/>
    <property type="project" value="InterPro"/>
</dbReference>
<dbReference type="GO" id="GO:0006508">
    <property type="term" value="P:proteolysis"/>
    <property type="evidence" value="ECO:0007669"/>
    <property type="project" value="UniProtKB-KW"/>
</dbReference>
<dbReference type="CDD" id="cd04077">
    <property type="entry name" value="Peptidases_S8_PCSK9_ProteinaseK_like"/>
    <property type="match status" value="1"/>
</dbReference>
<dbReference type="FunFam" id="3.40.50.200:FF:000014">
    <property type="entry name" value="Proteinase K"/>
    <property type="match status" value="1"/>
</dbReference>
<dbReference type="Gene3D" id="3.30.70.80">
    <property type="entry name" value="Peptidase S8 propeptide/proteinase inhibitor I9"/>
    <property type="match status" value="1"/>
</dbReference>
<dbReference type="Gene3D" id="3.40.50.200">
    <property type="entry name" value="Peptidase S8/S53 domain"/>
    <property type="match status" value="1"/>
</dbReference>
<dbReference type="InterPro" id="IPR034193">
    <property type="entry name" value="PCSK9_ProteinaseK-like"/>
</dbReference>
<dbReference type="InterPro" id="IPR000209">
    <property type="entry name" value="Peptidase_S8/S53_dom"/>
</dbReference>
<dbReference type="InterPro" id="IPR036852">
    <property type="entry name" value="Peptidase_S8/S53_dom_sf"/>
</dbReference>
<dbReference type="InterPro" id="IPR023827">
    <property type="entry name" value="Peptidase_S8_Asp-AS"/>
</dbReference>
<dbReference type="InterPro" id="IPR022398">
    <property type="entry name" value="Peptidase_S8_His-AS"/>
</dbReference>
<dbReference type="InterPro" id="IPR023828">
    <property type="entry name" value="Peptidase_S8_Ser-AS"/>
</dbReference>
<dbReference type="InterPro" id="IPR050131">
    <property type="entry name" value="Peptidase_S8_subtilisin-like"/>
</dbReference>
<dbReference type="InterPro" id="IPR015500">
    <property type="entry name" value="Peptidase_S8_subtilisin-rel"/>
</dbReference>
<dbReference type="InterPro" id="IPR010259">
    <property type="entry name" value="S8pro/Inhibitor_I9"/>
</dbReference>
<dbReference type="InterPro" id="IPR037045">
    <property type="entry name" value="S8pro/Inhibitor_I9_sf"/>
</dbReference>
<dbReference type="PANTHER" id="PTHR43806:SF11">
    <property type="entry name" value="CEREVISIN-RELATED"/>
    <property type="match status" value="1"/>
</dbReference>
<dbReference type="PANTHER" id="PTHR43806">
    <property type="entry name" value="PEPTIDASE S8"/>
    <property type="match status" value="1"/>
</dbReference>
<dbReference type="Pfam" id="PF05922">
    <property type="entry name" value="Inhibitor_I9"/>
    <property type="match status" value="1"/>
</dbReference>
<dbReference type="Pfam" id="PF00082">
    <property type="entry name" value="Peptidase_S8"/>
    <property type="match status" value="1"/>
</dbReference>
<dbReference type="PRINTS" id="PR00723">
    <property type="entry name" value="SUBTILISIN"/>
</dbReference>
<dbReference type="SUPFAM" id="SSF54897">
    <property type="entry name" value="Protease propeptides/inhibitors"/>
    <property type="match status" value="1"/>
</dbReference>
<dbReference type="SUPFAM" id="SSF52743">
    <property type="entry name" value="Subtilisin-like"/>
    <property type="match status" value="1"/>
</dbReference>
<dbReference type="PROSITE" id="PS51892">
    <property type="entry name" value="SUBTILASE"/>
    <property type="match status" value="1"/>
</dbReference>
<dbReference type="PROSITE" id="PS00136">
    <property type="entry name" value="SUBTILASE_ASP"/>
    <property type="match status" value="1"/>
</dbReference>
<dbReference type="PROSITE" id="PS00137">
    <property type="entry name" value="SUBTILASE_HIS"/>
    <property type="match status" value="1"/>
</dbReference>
<dbReference type="PROSITE" id="PS00138">
    <property type="entry name" value="SUBTILASE_SER"/>
    <property type="match status" value="1"/>
</dbReference>
<reference key="1">
    <citation type="journal article" date="2011" name="Genome Biol.">
        <title>Comparative and functional genomics provide insights into the pathogenicity of dermatophytic fungi.</title>
        <authorList>
            <person name="Burmester A."/>
            <person name="Shelest E."/>
            <person name="Gloeckner G."/>
            <person name="Heddergott C."/>
            <person name="Schindler S."/>
            <person name="Staib P."/>
            <person name="Heidel A."/>
            <person name="Felder M."/>
            <person name="Petzold A."/>
            <person name="Szafranski K."/>
            <person name="Feuermann M."/>
            <person name="Pedruzzi I."/>
            <person name="Priebe S."/>
            <person name="Groth M."/>
            <person name="Winkler R."/>
            <person name="Li W."/>
            <person name="Kniemeyer O."/>
            <person name="Schroeckh V."/>
            <person name="Hertweck C."/>
            <person name="Hube B."/>
            <person name="White T.C."/>
            <person name="Platzer M."/>
            <person name="Guthke R."/>
            <person name="Heitman J."/>
            <person name="Woestemeyer J."/>
            <person name="Zipfel P.F."/>
            <person name="Monod M."/>
            <person name="Brakhage A.A."/>
        </authorList>
    </citation>
    <scope>NUCLEOTIDE SEQUENCE [LARGE SCALE GENOMIC DNA]</scope>
    <source>
        <strain>HKI 0517</strain>
    </source>
</reference>
<proteinExistence type="inferred from homology"/>
<evidence type="ECO:0000250" key="1"/>
<evidence type="ECO:0000255" key="2"/>
<evidence type="ECO:0000255" key="3">
    <source>
        <dbReference type="PROSITE-ProRule" id="PRU01240"/>
    </source>
</evidence>
<evidence type="ECO:0000305" key="4"/>
<accession>D4D5H3</accession>
<protein>
    <recommendedName>
        <fullName>Subtilisin-like protease 6</fullName>
        <ecNumber>3.4.21.-</ecNumber>
    </recommendedName>
</protein>
<feature type="signal peptide" evidence="2">
    <location>
        <begin position="1"/>
        <end position="20"/>
    </location>
</feature>
<feature type="propeptide" id="PRO_0000397802" evidence="1">
    <location>
        <begin position="21"/>
        <end position="127"/>
    </location>
</feature>
<feature type="chain" id="PRO_0000397803" description="Subtilisin-like protease 6">
    <location>
        <begin position="128"/>
        <end position="412"/>
    </location>
</feature>
<feature type="domain" description="Inhibitor I9" evidence="2">
    <location>
        <begin position="36"/>
        <end position="120"/>
    </location>
</feature>
<feature type="domain" description="Peptidase S8" evidence="3">
    <location>
        <begin position="135"/>
        <end position="412"/>
    </location>
</feature>
<feature type="active site" description="Charge relay system" evidence="3">
    <location>
        <position position="167"/>
    </location>
</feature>
<feature type="active site" description="Charge relay system" evidence="3">
    <location>
        <position position="198"/>
    </location>
</feature>
<feature type="active site" description="Charge relay system" evidence="3">
    <location>
        <position position="358"/>
    </location>
</feature>
<feature type="glycosylation site" description="N-linked (GlcNAc...) asparagine" evidence="2">
    <location>
        <position position="252"/>
    </location>
</feature>
<feature type="glycosylation site" description="N-linked (GlcNAc...) asparagine" evidence="2">
    <location>
        <position position="264"/>
    </location>
</feature>
<feature type="glycosylation site" description="N-linked (GlcNAc...) asparagine" evidence="2">
    <location>
        <position position="325"/>
    </location>
</feature>
<feature type="glycosylation site" description="N-linked (GlcNAc...) asparagine" evidence="2">
    <location>
        <position position="408"/>
    </location>
</feature>